<accession>Q9AK82</accession>
<name>DPO4_STRCO</name>
<dbReference type="EC" id="2.7.7.7" evidence="1"/>
<dbReference type="EMBL" id="AL939108">
    <property type="protein sequence ID" value="CAC32304.1"/>
    <property type="status" value="ALT_INIT"/>
    <property type="molecule type" value="Genomic_DNA"/>
</dbReference>
<dbReference type="RefSeq" id="NP_625664.2">
    <property type="nucleotide sequence ID" value="NC_003888.3"/>
</dbReference>
<dbReference type="RefSeq" id="WP_011027755.1">
    <property type="nucleotide sequence ID" value="NZ_VNID01000006.1"/>
</dbReference>
<dbReference type="SMR" id="Q9AK82"/>
<dbReference type="FunCoup" id="Q9AK82">
    <property type="interactions" value="294"/>
</dbReference>
<dbReference type="STRING" id="100226.gene:17758963"/>
<dbReference type="PaxDb" id="100226-SCO1380"/>
<dbReference type="KEGG" id="sco:SCO1380"/>
<dbReference type="PATRIC" id="fig|100226.15.peg.1388"/>
<dbReference type="eggNOG" id="COG0389">
    <property type="taxonomic scope" value="Bacteria"/>
</dbReference>
<dbReference type="HOGENOM" id="CLU_012348_1_0_11"/>
<dbReference type="InParanoid" id="Q9AK82"/>
<dbReference type="OrthoDB" id="9808813at2"/>
<dbReference type="PhylomeDB" id="Q9AK82"/>
<dbReference type="Proteomes" id="UP000001973">
    <property type="component" value="Chromosome"/>
</dbReference>
<dbReference type="GO" id="GO:0005737">
    <property type="term" value="C:cytoplasm"/>
    <property type="evidence" value="ECO:0007669"/>
    <property type="project" value="UniProtKB-SubCell"/>
</dbReference>
<dbReference type="GO" id="GO:0003684">
    <property type="term" value="F:damaged DNA binding"/>
    <property type="evidence" value="ECO:0007669"/>
    <property type="project" value="InterPro"/>
</dbReference>
<dbReference type="GO" id="GO:0003887">
    <property type="term" value="F:DNA-directed DNA polymerase activity"/>
    <property type="evidence" value="ECO:0000318"/>
    <property type="project" value="GO_Central"/>
</dbReference>
<dbReference type="GO" id="GO:0000287">
    <property type="term" value="F:magnesium ion binding"/>
    <property type="evidence" value="ECO:0007669"/>
    <property type="project" value="UniProtKB-UniRule"/>
</dbReference>
<dbReference type="GO" id="GO:0006261">
    <property type="term" value="P:DNA-templated DNA replication"/>
    <property type="evidence" value="ECO:0007669"/>
    <property type="project" value="UniProtKB-UniRule"/>
</dbReference>
<dbReference type="GO" id="GO:0042276">
    <property type="term" value="P:error-prone translesion synthesis"/>
    <property type="evidence" value="ECO:0000318"/>
    <property type="project" value="GO_Central"/>
</dbReference>
<dbReference type="GO" id="GO:0009432">
    <property type="term" value="P:SOS response"/>
    <property type="evidence" value="ECO:0000318"/>
    <property type="project" value="GO_Central"/>
</dbReference>
<dbReference type="CDD" id="cd03586">
    <property type="entry name" value="PolY_Pol_IV_kappa"/>
    <property type="match status" value="1"/>
</dbReference>
<dbReference type="FunFam" id="3.30.1490.100:FF:000004">
    <property type="entry name" value="DNA polymerase IV"/>
    <property type="match status" value="1"/>
</dbReference>
<dbReference type="Gene3D" id="3.30.70.270">
    <property type="match status" value="1"/>
</dbReference>
<dbReference type="Gene3D" id="3.40.1170.60">
    <property type="match status" value="1"/>
</dbReference>
<dbReference type="Gene3D" id="1.10.150.20">
    <property type="entry name" value="5' to 3' exonuclease, C-terminal subdomain"/>
    <property type="match status" value="1"/>
</dbReference>
<dbReference type="Gene3D" id="3.30.1490.100">
    <property type="entry name" value="DNA polymerase, Y-family, little finger domain"/>
    <property type="match status" value="1"/>
</dbReference>
<dbReference type="HAMAP" id="MF_01113">
    <property type="entry name" value="DNApol_IV"/>
    <property type="match status" value="1"/>
</dbReference>
<dbReference type="InterPro" id="IPR043502">
    <property type="entry name" value="DNA/RNA_pol_sf"/>
</dbReference>
<dbReference type="InterPro" id="IPR036775">
    <property type="entry name" value="DNA_pol_Y-fam_lit_finger_sf"/>
</dbReference>
<dbReference type="InterPro" id="IPR017961">
    <property type="entry name" value="DNA_pol_Y-fam_little_finger"/>
</dbReference>
<dbReference type="InterPro" id="IPR050116">
    <property type="entry name" value="DNA_polymerase-Y"/>
</dbReference>
<dbReference type="InterPro" id="IPR022880">
    <property type="entry name" value="DNApol_IV"/>
</dbReference>
<dbReference type="InterPro" id="IPR053848">
    <property type="entry name" value="IMS_HHH_1"/>
</dbReference>
<dbReference type="InterPro" id="IPR043128">
    <property type="entry name" value="Rev_trsase/Diguanyl_cyclase"/>
</dbReference>
<dbReference type="InterPro" id="IPR001126">
    <property type="entry name" value="UmuC"/>
</dbReference>
<dbReference type="NCBIfam" id="NF002677">
    <property type="entry name" value="PRK02406.1"/>
    <property type="match status" value="1"/>
</dbReference>
<dbReference type="NCBIfam" id="NF002882">
    <property type="entry name" value="PRK03348.1"/>
    <property type="match status" value="1"/>
</dbReference>
<dbReference type="PANTHER" id="PTHR11076:SF33">
    <property type="entry name" value="DNA POLYMERASE KAPPA"/>
    <property type="match status" value="1"/>
</dbReference>
<dbReference type="PANTHER" id="PTHR11076">
    <property type="entry name" value="DNA REPAIR POLYMERASE UMUC / TRANSFERASE FAMILY MEMBER"/>
    <property type="match status" value="1"/>
</dbReference>
<dbReference type="Pfam" id="PF00817">
    <property type="entry name" value="IMS"/>
    <property type="match status" value="1"/>
</dbReference>
<dbReference type="Pfam" id="PF11799">
    <property type="entry name" value="IMS_C"/>
    <property type="match status" value="1"/>
</dbReference>
<dbReference type="Pfam" id="PF21999">
    <property type="entry name" value="IMS_HHH_1"/>
    <property type="match status" value="1"/>
</dbReference>
<dbReference type="SUPFAM" id="SSF56672">
    <property type="entry name" value="DNA/RNA polymerases"/>
    <property type="match status" value="1"/>
</dbReference>
<dbReference type="SUPFAM" id="SSF100879">
    <property type="entry name" value="Lesion bypass DNA polymerase (Y-family), little finger domain"/>
    <property type="match status" value="1"/>
</dbReference>
<dbReference type="PROSITE" id="PS50173">
    <property type="entry name" value="UMUC"/>
    <property type="match status" value="1"/>
</dbReference>
<evidence type="ECO:0000255" key="1">
    <source>
        <dbReference type="HAMAP-Rule" id="MF_01113"/>
    </source>
</evidence>
<evidence type="ECO:0000256" key="2">
    <source>
        <dbReference type="SAM" id="MobiDB-lite"/>
    </source>
</evidence>
<evidence type="ECO:0000305" key="3"/>
<comment type="function">
    <text evidence="1">Poorly processive, error-prone DNA polymerase involved in untargeted mutagenesis. Copies undamaged DNA at stalled replication forks, which arise in vivo from mismatched or misaligned primer ends. These misaligned primers can be extended by PolIV. Exhibits no 3'-5' exonuclease (proofreading) activity. May be involved in translesional synthesis, in conjunction with the beta clamp from PolIII.</text>
</comment>
<comment type="catalytic activity">
    <reaction evidence="1">
        <text>DNA(n) + a 2'-deoxyribonucleoside 5'-triphosphate = DNA(n+1) + diphosphate</text>
        <dbReference type="Rhea" id="RHEA:22508"/>
        <dbReference type="Rhea" id="RHEA-COMP:17339"/>
        <dbReference type="Rhea" id="RHEA-COMP:17340"/>
        <dbReference type="ChEBI" id="CHEBI:33019"/>
        <dbReference type="ChEBI" id="CHEBI:61560"/>
        <dbReference type="ChEBI" id="CHEBI:173112"/>
        <dbReference type="EC" id="2.7.7.7"/>
    </reaction>
</comment>
<comment type="cofactor">
    <cofactor evidence="1">
        <name>Mg(2+)</name>
        <dbReference type="ChEBI" id="CHEBI:18420"/>
    </cofactor>
    <text evidence="1">Binds 2 magnesium ions per subunit.</text>
</comment>
<comment type="subunit">
    <text evidence="1">Monomer.</text>
</comment>
<comment type="subcellular location">
    <subcellularLocation>
        <location evidence="1">Cytoplasm</location>
    </subcellularLocation>
</comment>
<comment type="similarity">
    <text evidence="1">Belongs to the DNA polymerase type-Y family.</text>
</comment>
<comment type="sequence caution" evidence="3">
    <conflict type="erroneous initiation">
        <sequence resource="EMBL-CDS" id="CAC32304"/>
    </conflict>
</comment>
<gene>
    <name evidence="1" type="primary">dinB</name>
    <name type="ordered locus">SCO1380</name>
    <name type="ORF">SC10A9.22c</name>
</gene>
<proteinExistence type="inferred from homology"/>
<keyword id="KW-0963">Cytoplasm</keyword>
<keyword id="KW-0227">DNA damage</keyword>
<keyword id="KW-0234">DNA repair</keyword>
<keyword id="KW-0235">DNA replication</keyword>
<keyword id="KW-0238">DNA-binding</keyword>
<keyword id="KW-0239">DNA-directed DNA polymerase</keyword>
<keyword id="KW-0460">Magnesium</keyword>
<keyword id="KW-0479">Metal-binding</keyword>
<keyword id="KW-0515">Mutator protein</keyword>
<keyword id="KW-0548">Nucleotidyltransferase</keyword>
<keyword id="KW-1185">Reference proteome</keyword>
<keyword id="KW-0808">Transferase</keyword>
<feature type="chain" id="PRO_0000173953" description="DNA polymerase IV">
    <location>
        <begin position="1"/>
        <end position="479"/>
    </location>
</feature>
<feature type="domain" description="UmuC" evidence="1">
    <location>
        <begin position="7"/>
        <end position="189"/>
    </location>
</feature>
<feature type="region of interest" description="Disordered" evidence="2">
    <location>
        <begin position="357"/>
        <end position="400"/>
    </location>
</feature>
<feature type="region of interest" description="Disordered" evidence="2">
    <location>
        <begin position="430"/>
        <end position="479"/>
    </location>
</feature>
<feature type="compositionally biased region" description="Basic and acidic residues" evidence="2">
    <location>
        <begin position="381"/>
        <end position="396"/>
    </location>
</feature>
<feature type="active site" evidence="1">
    <location>
        <position position="106"/>
    </location>
</feature>
<feature type="binding site" evidence="1">
    <location>
        <position position="11"/>
    </location>
    <ligand>
        <name>Mg(2+)</name>
        <dbReference type="ChEBI" id="CHEBI:18420"/>
    </ligand>
</feature>
<feature type="binding site" evidence="1">
    <location>
        <position position="105"/>
    </location>
    <ligand>
        <name>Mg(2+)</name>
        <dbReference type="ChEBI" id="CHEBI:18420"/>
    </ligand>
</feature>
<feature type="site" description="Substrate discrimination" evidence="1">
    <location>
        <position position="16"/>
    </location>
</feature>
<sequence>MRTAPTILHLDMDAFFASVEQASKPSLRGKAVVVGGLGPRGVVATCSYEARVFGVHSAMPMGQARRLAPHAAYLVPRFELYRSISEQVMRLLRELSPLVEPLSLDEAFVDLDAGGAARDAETARLAGTKLRTDIRTVTGLTGSVGLAASKMLAKIASEAAKPDGLVLIPPGTERAMLEPMTVRTLPGVGPATGDHLRRAGITTVGEIAEAGEDELVRLLGKAHGHALYAMALARDERPVVAERETKSVSVEDTYDVDIHDRVRVGVEVGRLADRCVRRLRASGLSGRTIVLKVRRYDFSTLTRSETLRGPTDDPAVVREAAARLLDSVDTTGGVRLLGVGVSGLADYTQEDLFAQAAGDRAEEPAEEPGTEPAEAHSPSPAERRWPSGHDVRHTELGHGWVQGSGLGRVTVRFETPYSGVGRVRTFLVDDPELTPADPLPLVADTEGGAGQPSSGPLPLPASLPKSWSGGGGAAATSRP</sequence>
<reference key="1">
    <citation type="journal article" date="2002" name="Nature">
        <title>Complete genome sequence of the model actinomycete Streptomyces coelicolor A3(2).</title>
        <authorList>
            <person name="Bentley S.D."/>
            <person name="Chater K.F."/>
            <person name="Cerdeno-Tarraga A.-M."/>
            <person name="Challis G.L."/>
            <person name="Thomson N.R."/>
            <person name="James K.D."/>
            <person name="Harris D.E."/>
            <person name="Quail M.A."/>
            <person name="Kieser H."/>
            <person name="Harper D."/>
            <person name="Bateman A."/>
            <person name="Brown S."/>
            <person name="Chandra G."/>
            <person name="Chen C.W."/>
            <person name="Collins M."/>
            <person name="Cronin A."/>
            <person name="Fraser A."/>
            <person name="Goble A."/>
            <person name="Hidalgo J."/>
            <person name="Hornsby T."/>
            <person name="Howarth S."/>
            <person name="Huang C.-H."/>
            <person name="Kieser T."/>
            <person name="Larke L."/>
            <person name="Murphy L.D."/>
            <person name="Oliver K."/>
            <person name="O'Neil S."/>
            <person name="Rabbinowitsch E."/>
            <person name="Rajandream M.A."/>
            <person name="Rutherford K.M."/>
            <person name="Rutter S."/>
            <person name="Seeger K."/>
            <person name="Saunders D."/>
            <person name="Sharp S."/>
            <person name="Squares R."/>
            <person name="Squares S."/>
            <person name="Taylor K."/>
            <person name="Warren T."/>
            <person name="Wietzorrek A."/>
            <person name="Woodward J.R."/>
            <person name="Barrell B.G."/>
            <person name="Parkhill J."/>
            <person name="Hopwood D.A."/>
        </authorList>
    </citation>
    <scope>NUCLEOTIDE SEQUENCE [LARGE SCALE GENOMIC DNA]</scope>
    <source>
        <strain>ATCC BAA-471 / A3(2) / M145</strain>
    </source>
</reference>
<organism>
    <name type="scientific">Streptomyces coelicolor (strain ATCC BAA-471 / A3(2) / M145)</name>
    <dbReference type="NCBI Taxonomy" id="100226"/>
    <lineage>
        <taxon>Bacteria</taxon>
        <taxon>Bacillati</taxon>
        <taxon>Actinomycetota</taxon>
        <taxon>Actinomycetes</taxon>
        <taxon>Kitasatosporales</taxon>
        <taxon>Streptomycetaceae</taxon>
        <taxon>Streptomyces</taxon>
        <taxon>Streptomyces albidoflavus group</taxon>
    </lineage>
</organism>
<protein>
    <recommendedName>
        <fullName evidence="1">DNA polymerase IV</fullName>
        <shortName evidence="1">Pol IV</shortName>
        <ecNumber evidence="1">2.7.7.7</ecNumber>
    </recommendedName>
</protein>